<dbReference type="EC" id="3.5.2.3" evidence="1"/>
<dbReference type="EMBL" id="CP000948">
    <property type="protein sequence ID" value="ACB02255.1"/>
    <property type="molecule type" value="Genomic_DNA"/>
</dbReference>
<dbReference type="RefSeq" id="WP_000126534.1">
    <property type="nucleotide sequence ID" value="NC_010473.1"/>
</dbReference>
<dbReference type="SMR" id="B1X9H5"/>
<dbReference type="MEROPS" id="M38.A02"/>
<dbReference type="GeneID" id="75203649"/>
<dbReference type="KEGG" id="ecd:ECDH10B_1133"/>
<dbReference type="HOGENOM" id="CLU_041558_1_0_6"/>
<dbReference type="UniPathway" id="UPA00070">
    <property type="reaction ID" value="UER00117"/>
</dbReference>
<dbReference type="GO" id="GO:0005829">
    <property type="term" value="C:cytosol"/>
    <property type="evidence" value="ECO:0007669"/>
    <property type="project" value="TreeGrafter"/>
</dbReference>
<dbReference type="GO" id="GO:0004151">
    <property type="term" value="F:dihydroorotase activity"/>
    <property type="evidence" value="ECO:0007669"/>
    <property type="project" value="UniProtKB-UniRule"/>
</dbReference>
<dbReference type="GO" id="GO:0008270">
    <property type="term" value="F:zinc ion binding"/>
    <property type="evidence" value="ECO:0007669"/>
    <property type="project" value="UniProtKB-UniRule"/>
</dbReference>
<dbReference type="GO" id="GO:0006207">
    <property type="term" value="P:'de novo' pyrimidine nucleobase biosynthetic process"/>
    <property type="evidence" value="ECO:0007669"/>
    <property type="project" value="TreeGrafter"/>
</dbReference>
<dbReference type="GO" id="GO:0044205">
    <property type="term" value="P:'de novo' UMP biosynthetic process"/>
    <property type="evidence" value="ECO:0007669"/>
    <property type="project" value="UniProtKB-UniRule"/>
</dbReference>
<dbReference type="CDD" id="cd01294">
    <property type="entry name" value="DHOase"/>
    <property type="match status" value="1"/>
</dbReference>
<dbReference type="FunFam" id="3.20.20.140:FF:000006">
    <property type="entry name" value="Dihydroorotase"/>
    <property type="match status" value="1"/>
</dbReference>
<dbReference type="Gene3D" id="3.20.20.140">
    <property type="entry name" value="Metal-dependent hydrolases"/>
    <property type="match status" value="1"/>
</dbReference>
<dbReference type="HAMAP" id="MF_00219">
    <property type="entry name" value="PyrC_classII"/>
    <property type="match status" value="1"/>
</dbReference>
<dbReference type="InterPro" id="IPR006680">
    <property type="entry name" value="Amidohydro-rel"/>
</dbReference>
<dbReference type="InterPro" id="IPR004721">
    <property type="entry name" value="DHOdimr"/>
</dbReference>
<dbReference type="InterPro" id="IPR002195">
    <property type="entry name" value="Dihydroorotase_CS"/>
</dbReference>
<dbReference type="InterPro" id="IPR032466">
    <property type="entry name" value="Metal_Hydrolase"/>
</dbReference>
<dbReference type="NCBIfam" id="TIGR00856">
    <property type="entry name" value="pyrC_dimer"/>
    <property type="match status" value="1"/>
</dbReference>
<dbReference type="PANTHER" id="PTHR43137">
    <property type="entry name" value="DIHYDROOROTASE"/>
    <property type="match status" value="1"/>
</dbReference>
<dbReference type="PANTHER" id="PTHR43137:SF1">
    <property type="entry name" value="DIHYDROOROTASE"/>
    <property type="match status" value="1"/>
</dbReference>
<dbReference type="Pfam" id="PF01979">
    <property type="entry name" value="Amidohydro_1"/>
    <property type="match status" value="1"/>
</dbReference>
<dbReference type="PIRSF" id="PIRSF001237">
    <property type="entry name" value="DHOdimr"/>
    <property type="match status" value="1"/>
</dbReference>
<dbReference type="SUPFAM" id="SSF51556">
    <property type="entry name" value="Metallo-dependent hydrolases"/>
    <property type="match status" value="1"/>
</dbReference>
<dbReference type="PROSITE" id="PS00482">
    <property type="entry name" value="DIHYDROOROTASE_1"/>
    <property type="match status" value="1"/>
</dbReference>
<dbReference type="PROSITE" id="PS00483">
    <property type="entry name" value="DIHYDROOROTASE_2"/>
    <property type="match status" value="1"/>
</dbReference>
<organism>
    <name type="scientific">Escherichia coli (strain K12 / DH10B)</name>
    <dbReference type="NCBI Taxonomy" id="316385"/>
    <lineage>
        <taxon>Bacteria</taxon>
        <taxon>Pseudomonadati</taxon>
        <taxon>Pseudomonadota</taxon>
        <taxon>Gammaproteobacteria</taxon>
        <taxon>Enterobacterales</taxon>
        <taxon>Enterobacteriaceae</taxon>
        <taxon>Escherichia</taxon>
    </lineage>
</organism>
<gene>
    <name evidence="1" type="primary">pyrC</name>
    <name type="ordered locus">ECDH10B_1133</name>
</gene>
<comment type="function">
    <text evidence="1">Catalyzes the reversible cyclization of carbamoyl aspartate to dihydroorotate.</text>
</comment>
<comment type="catalytic activity">
    <reaction evidence="1">
        <text>(S)-dihydroorotate + H2O = N-carbamoyl-L-aspartate + H(+)</text>
        <dbReference type="Rhea" id="RHEA:24296"/>
        <dbReference type="ChEBI" id="CHEBI:15377"/>
        <dbReference type="ChEBI" id="CHEBI:15378"/>
        <dbReference type="ChEBI" id="CHEBI:30864"/>
        <dbReference type="ChEBI" id="CHEBI:32814"/>
        <dbReference type="EC" id="3.5.2.3"/>
    </reaction>
</comment>
<comment type="cofactor">
    <cofactor evidence="1">
        <name>Zn(2+)</name>
        <dbReference type="ChEBI" id="CHEBI:29105"/>
    </cofactor>
    <text evidence="1">Binds 2 Zn(2+) ions per subunit.</text>
</comment>
<comment type="pathway">
    <text evidence="1">Pyrimidine metabolism; UMP biosynthesis via de novo pathway; (S)-dihydroorotate from bicarbonate: step 3/3.</text>
</comment>
<comment type="subunit">
    <text evidence="1">Homodimer.</text>
</comment>
<comment type="similarity">
    <text evidence="1">Belongs to the metallo-dependent hydrolases superfamily. DHOase family. Class II DHOase subfamily.</text>
</comment>
<protein>
    <recommendedName>
        <fullName evidence="1">Dihydroorotase</fullName>
        <shortName evidence="1">DHOase</shortName>
        <ecNumber evidence="1">3.5.2.3</ecNumber>
    </recommendedName>
</protein>
<keyword id="KW-0378">Hydrolase</keyword>
<keyword id="KW-0479">Metal-binding</keyword>
<keyword id="KW-0665">Pyrimidine biosynthesis</keyword>
<keyword id="KW-0862">Zinc</keyword>
<proteinExistence type="inferred from homology"/>
<evidence type="ECO:0000255" key="1">
    <source>
        <dbReference type="HAMAP-Rule" id="MF_00219"/>
    </source>
</evidence>
<name>PYRC_ECODH</name>
<reference key="1">
    <citation type="journal article" date="2008" name="J. Bacteriol.">
        <title>The complete genome sequence of Escherichia coli DH10B: insights into the biology of a laboratory workhorse.</title>
        <authorList>
            <person name="Durfee T."/>
            <person name="Nelson R."/>
            <person name="Baldwin S."/>
            <person name="Plunkett G. III"/>
            <person name="Burland V."/>
            <person name="Mau B."/>
            <person name="Petrosino J.F."/>
            <person name="Qin X."/>
            <person name="Muzny D.M."/>
            <person name="Ayele M."/>
            <person name="Gibbs R.A."/>
            <person name="Csorgo B."/>
            <person name="Posfai G."/>
            <person name="Weinstock G.M."/>
            <person name="Blattner F.R."/>
        </authorList>
    </citation>
    <scope>NUCLEOTIDE SEQUENCE [LARGE SCALE GENOMIC DNA]</scope>
    <source>
        <strain>K12 / DH10B</strain>
    </source>
</reference>
<accession>B1X9H5</accession>
<sequence length="348" mass="38827">MTAPSQVLKIRRPDDWHLHLRDGDMLKTVVPYTSEIYGRAIVMPNLAPPVTTVEAAVAYRQRILDAVPAGHDFTPLMTCYLTDSLDPNELERGFNEGVFTAAKLYPANATTNSSHGVTSIDAIMPVLERMEKIGMPLLVHGEVTHADIDIFDREARFIESVMEPLRQRLTALKVVFEHITTKDAADYVRDGNERLAATITPQHLMFNRNHMLVGGVRPHLYCLPILKRNIHQQALRELVASGFNRVFLGTDSAPHARHRKESSCGCAGCFNAPTALGSYATVFEEMNALQHFEAFCSVNGPQFYGLPVNDTFIELVREEQQVAESIALTDDTLVPFLAGETVRWSVKQ</sequence>
<feature type="chain" id="PRO_1000100042" description="Dihydroorotase">
    <location>
        <begin position="1"/>
        <end position="348"/>
    </location>
</feature>
<feature type="active site" evidence="1">
    <location>
        <position position="251"/>
    </location>
</feature>
<feature type="binding site" evidence="1">
    <location>
        <position position="17"/>
    </location>
    <ligand>
        <name>Zn(2+)</name>
        <dbReference type="ChEBI" id="CHEBI:29105"/>
        <label>1</label>
    </ligand>
</feature>
<feature type="binding site" evidence="1">
    <location>
        <begin position="19"/>
        <end position="21"/>
    </location>
    <ligand>
        <name>substrate</name>
    </ligand>
</feature>
<feature type="binding site" evidence="1">
    <location>
        <position position="19"/>
    </location>
    <ligand>
        <name>Zn(2+)</name>
        <dbReference type="ChEBI" id="CHEBI:29105"/>
        <label>1</label>
    </ligand>
</feature>
<feature type="binding site" evidence="1">
    <location>
        <position position="45"/>
    </location>
    <ligand>
        <name>substrate</name>
    </ligand>
</feature>
<feature type="binding site" description="via carbamate group" evidence="1">
    <location>
        <position position="103"/>
    </location>
    <ligand>
        <name>Zn(2+)</name>
        <dbReference type="ChEBI" id="CHEBI:29105"/>
        <label>1</label>
    </ligand>
</feature>
<feature type="binding site" description="via carbamate group" evidence="1">
    <location>
        <position position="103"/>
    </location>
    <ligand>
        <name>Zn(2+)</name>
        <dbReference type="ChEBI" id="CHEBI:29105"/>
        <label>2</label>
    </ligand>
</feature>
<feature type="binding site" evidence="1">
    <location>
        <position position="140"/>
    </location>
    <ligand>
        <name>substrate</name>
    </ligand>
</feature>
<feature type="binding site" evidence="1">
    <location>
        <position position="140"/>
    </location>
    <ligand>
        <name>Zn(2+)</name>
        <dbReference type="ChEBI" id="CHEBI:29105"/>
        <label>2</label>
    </ligand>
</feature>
<feature type="binding site" evidence="1">
    <location>
        <position position="178"/>
    </location>
    <ligand>
        <name>Zn(2+)</name>
        <dbReference type="ChEBI" id="CHEBI:29105"/>
        <label>2</label>
    </ligand>
</feature>
<feature type="binding site" evidence="1">
    <location>
        <position position="223"/>
    </location>
    <ligand>
        <name>substrate</name>
    </ligand>
</feature>
<feature type="binding site" evidence="1">
    <location>
        <position position="251"/>
    </location>
    <ligand>
        <name>Zn(2+)</name>
        <dbReference type="ChEBI" id="CHEBI:29105"/>
        <label>1</label>
    </ligand>
</feature>
<feature type="binding site" evidence="1">
    <location>
        <position position="255"/>
    </location>
    <ligand>
        <name>substrate</name>
    </ligand>
</feature>
<feature type="binding site" evidence="1">
    <location>
        <position position="267"/>
    </location>
    <ligand>
        <name>substrate</name>
    </ligand>
</feature>
<feature type="modified residue" description="N6-carboxylysine" evidence="1">
    <location>
        <position position="103"/>
    </location>
</feature>